<organism>
    <name type="scientific">Chlamydia trachomatis serovar L2 (strain ATCC VR-902B / DSM 19102 / 434/Bu)</name>
    <dbReference type="NCBI Taxonomy" id="471472"/>
    <lineage>
        <taxon>Bacteria</taxon>
        <taxon>Pseudomonadati</taxon>
        <taxon>Chlamydiota</taxon>
        <taxon>Chlamydiia</taxon>
        <taxon>Chlamydiales</taxon>
        <taxon>Chlamydiaceae</taxon>
        <taxon>Chlamydia/Chlamydophila group</taxon>
        <taxon>Chlamydia</taxon>
    </lineage>
</organism>
<proteinExistence type="inferred from homology"/>
<reference key="1">
    <citation type="journal article" date="2008" name="Genome Res.">
        <title>Chlamydia trachomatis: genome sequence analysis of lymphogranuloma venereum isolates.</title>
        <authorList>
            <person name="Thomson N.R."/>
            <person name="Holden M.T.G."/>
            <person name="Carder C."/>
            <person name="Lennard N."/>
            <person name="Lockey S.J."/>
            <person name="Marsh P."/>
            <person name="Skipp P."/>
            <person name="O'Connor C.D."/>
            <person name="Goodhead I."/>
            <person name="Norbertzcak H."/>
            <person name="Harris B."/>
            <person name="Ormond D."/>
            <person name="Rance R."/>
            <person name="Quail M.A."/>
            <person name="Parkhill J."/>
            <person name="Stephens R.S."/>
            <person name="Clarke I.N."/>
        </authorList>
    </citation>
    <scope>NUCLEOTIDE SEQUENCE [LARGE SCALE GENOMIC DNA]</scope>
    <source>
        <strain>ATCC VR-902B / DSM 19102 / 434/Bu</strain>
    </source>
</reference>
<name>NQRA_CHLT2</name>
<accession>B0B8K9</accession>
<feature type="chain" id="PRO_1000124170" description="Na(+)-translocating NADH-quinone reductase subunit A">
    <location>
        <begin position="1"/>
        <end position="465"/>
    </location>
</feature>
<sequence>MKIVVSRGLDLSLKGAPKESGFCGKVDPTYVSVDLRPFAPLPLEVKVTPGDQVTAGSPLAEYKLFSGVFITSPVDGEVVEIRRGNKRALLEIVIKKKPGISQTKFSYDLQSLTQKDLLEVFKKEGLFALFKQRPFDIPALPTQSPRDVFINLADNRPFTPSVEKHLSLFSSKEDGYYIFVVGVQAIAKLFGLKPHIISTDRLTLPTQDLVSIAHLHTIDGPFPSGSPSTHIHHIARIRNERDVVFTISFQEVLSIGHLFLKGFVLGQQIVALAGSALPPSQRKYLITAKGASFSDLLPKDIFSSDEITLISGDPLTGRLCKKEENPCLGMRDHTITLLPNPKTRESFSFLRLGWNKLTVTRTYLSGFFKRKRVFMDMDTNMHGEKRPIIDAEIYERVSAIPVPVALIIKALETQNFEEACRLGLLEVAPEDFALPTFIDPSKTEMFSIVKESLLRYAKENVVTSS</sequence>
<keyword id="KW-0406">Ion transport</keyword>
<keyword id="KW-0520">NAD</keyword>
<keyword id="KW-0915">Sodium</keyword>
<keyword id="KW-0739">Sodium transport</keyword>
<keyword id="KW-1278">Translocase</keyword>
<keyword id="KW-0813">Transport</keyword>
<keyword id="KW-0830">Ubiquinone</keyword>
<comment type="function">
    <text evidence="1">NQR complex catalyzes the reduction of ubiquinone-1 to ubiquinol by two successive reactions, coupled with the transport of Na(+) ions from the cytoplasm to the periplasm. NqrA to NqrE are probably involved in the second step, the conversion of ubisemiquinone to ubiquinol.</text>
</comment>
<comment type="catalytic activity">
    <reaction evidence="1">
        <text>a ubiquinone + n Na(+)(in) + NADH + H(+) = a ubiquinol + n Na(+)(out) + NAD(+)</text>
        <dbReference type="Rhea" id="RHEA:47748"/>
        <dbReference type="Rhea" id="RHEA-COMP:9565"/>
        <dbReference type="Rhea" id="RHEA-COMP:9566"/>
        <dbReference type="ChEBI" id="CHEBI:15378"/>
        <dbReference type="ChEBI" id="CHEBI:16389"/>
        <dbReference type="ChEBI" id="CHEBI:17976"/>
        <dbReference type="ChEBI" id="CHEBI:29101"/>
        <dbReference type="ChEBI" id="CHEBI:57540"/>
        <dbReference type="ChEBI" id="CHEBI:57945"/>
        <dbReference type="EC" id="7.2.1.1"/>
    </reaction>
</comment>
<comment type="subunit">
    <text evidence="1">Composed of six subunits; NqrA, NqrB, NqrC, NqrD, NqrE and NqrF.</text>
</comment>
<comment type="similarity">
    <text evidence="1">Belongs to the NqrA family.</text>
</comment>
<protein>
    <recommendedName>
        <fullName evidence="1">Na(+)-translocating NADH-quinone reductase subunit A</fullName>
        <shortName evidence="1">Na(+)-NQR subunit A</shortName>
        <shortName evidence="1">Na(+)-translocating NQR subunit A</shortName>
        <ecNumber evidence="1">7.2.1.1</ecNumber>
    </recommendedName>
    <alternativeName>
        <fullName evidence="1">NQR complex subunit A</fullName>
    </alternativeName>
    <alternativeName>
        <fullName evidence="1">NQR-1 subunit A</fullName>
    </alternativeName>
</protein>
<gene>
    <name evidence="1" type="primary">nqrA</name>
    <name type="ordered locus">CTL0002</name>
</gene>
<evidence type="ECO:0000255" key="1">
    <source>
        <dbReference type="HAMAP-Rule" id="MF_00425"/>
    </source>
</evidence>
<dbReference type="EC" id="7.2.1.1" evidence="1"/>
<dbReference type="EMBL" id="AM884176">
    <property type="protein sequence ID" value="CAP03446.1"/>
    <property type="molecule type" value="Genomic_DNA"/>
</dbReference>
<dbReference type="RefSeq" id="WP_009873252.1">
    <property type="nucleotide sequence ID" value="NC_010287.1"/>
</dbReference>
<dbReference type="RefSeq" id="YP_001654093.1">
    <property type="nucleotide sequence ID" value="NC_010287.1"/>
</dbReference>
<dbReference type="SMR" id="B0B8K9"/>
<dbReference type="KEGG" id="ctb:CTL0002"/>
<dbReference type="PATRIC" id="fig|471472.4.peg.2"/>
<dbReference type="HOGENOM" id="CLU_046656_0_0_0"/>
<dbReference type="Proteomes" id="UP001154402">
    <property type="component" value="Chromosome"/>
</dbReference>
<dbReference type="GO" id="GO:0016655">
    <property type="term" value="F:oxidoreductase activity, acting on NAD(P)H, quinone or similar compound as acceptor"/>
    <property type="evidence" value="ECO:0007669"/>
    <property type="project" value="UniProtKB-UniRule"/>
</dbReference>
<dbReference type="GO" id="GO:0006814">
    <property type="term" value="P:sodium ion transport"/>
    <property type="evidence" value="ECO:0007669"/>
    <property type="project" value="UniProtKB-UniRule"/>
</dbReference>
<dbReference type="HAMAP" id="MF_00425">
    <property type="entry name" value="NqrA"/>
    <property type="match status" value="1"/>
</dbReference>
<dbReference type="InterPro" id="IPR008703">
    <property type="entry name" value="NqrA"/>
</dbReference>
<dbReference type="InterPro" id="IPR056148">
    <property type="entry name" value="NQRA_2nd"/>
</dbReference>
<dbReference type="InterPro" id="IPR022615">
    <property type="entry name" value="NqrA_C_domain"/>
</dbReference>
<dbReference type="InterPro" id="IPR056147">
    <property type="entry name" value="NQRA_N"/>
</dbReference>
<dbReference type="NCBIfam" id="TIGR01936">
    <property type="entry name" value="nqrA"/>
    <property type="match status" value="1"/>
</dbReference>
<dbReference type="NCBIfam" id="NF003758">
    <property type="entry name" value="PRK05352.1-1"/>
    <property type="match status" value="1"/>
</dbReference>
<dbReference type="PANTHER" id="PTHR37839">
    <property type="entry name" value="NA(+)-TRANSLOCATING NADH-QUINONE REDUCTASE SUBUNIT A"/>
    <property type="match status" value="1"/>
</dbReference>
<dbReference type="PANTHER" id="PTHR37839:SF1">
    <property type="entry name" value="NA(+)-TRANSLOCATING NADH-QUINONE REDUCTASE SUBUNIT A"/>
    <property type="match status" value="1"/>
</dbReference>
<dbReference type="Pfam" id="PF24836">
    <property type="entry name" value="NQRA_2nd"/>
    <property type="match status" value="1"/>
</dbReference>
<dbReference type="Pfam" id="PF05896">
    <property type="entry name" value="NQRA_N"/>
    <property type="match status" value="1"/>
</dbReference>
<dbReference type="Pfam" id="PF11973">
    <property type="entry name" value="NQRA_SLBB"/>
    <property type="match status" value="1"/>
</dbReference>